<organism>
    <name type="scientific">Methanothermobacter thermautotrophicus (strain ATCC 29096 / DSM 1053 / JCM 10044 / NBRC 100330 / Delta H)</name>
    <name type="common">Methanobacterium thermoautotrophicum</name>
    <dbReference type="NCBI Taxonomy" id="187420"/>
    <lineage>
        <taxon>Archaea</taxon>
        <taxon>Methanobacteriati</taxon>
        <taxon>Methanobacteriota</taxon>
        <taxon>Methanomada group</taxon>
        <taxon>Methanobacteria</taxon>
        <taxon>Methanobacteriales</taxon>
        <taxon>Methanobacteriaceae</taxon>
        <taxon>Methanothermobacter</taxon>
    </lineage>
</organism>
<keyword id="KW-0378">Hydrolase</keyword>
<keyword id="KW-0479">Metal-binding</keyword>
<keyword id="KW-0665">Pyrimidine biosynthesis</keyword>
<keyword id="KW-1185">Reference proteome</keyword>
<keyword id="KW-0862">Zinc</keyword>
<comment type="function">
    <text evidence="1">Catalyzes the reversible cyclization of carbamoyl aspartate to dihydroorotate.</text>
</comment>
<comment type="catalytic activity">
    <reaction evidence="1">
        <text>(S)-dihydroorotate + H2O = N-carbamoyl-L-aspartate + H(+)</text>
        <dbReference type="Rhea" id="RHEA:24296"/>
        <dbReference type="ChEBI" id="CHEBI:15377"/>
        <dbReference type="ChEBI" id="CHEBI:15378"/>
        <dbReference type="ChEBI" id="CHEBI:30864"/>
        <dbReference type="ChEBI" id="CHEBI:32814"/>
        <dbReference type="EC" id="3.5.2.3"/>
    </reaction>
</comment>
<comment type="cofactor">
    <cofactor evidence="1">
        <name>Zn(2+)</name>
        <dbReference type="ChEBI" id="CHEBI:29105"/>
    </cofactor>
    <text evidence="1">Binds 2 Zn(2+) ions per subunit.</text>
</comment>
<comment type="pathway">
    <text evidence="1">Pyrimidine metabolism; UMP biosynthesis via de novo pathway; (S)-dihydroorotate from bicarbonate: step 3/3.</text>
</comment>
<comment type="similarity">
    <text evidence="1">Belongs to the metallo-dependent hydrolases superfamily. DHOase family. Class I DHOase subfamily.</text>
</comment>
<comment type="sequence caution" evidence="2">
    <conflict type="erroneous initiation">
        <sequence resource="EMBL-CDS" id="AAB85616"/>
    </conflict>
</comment>
<gene>
    <name evidence="1" type="primary">pyrC</name>
    <name type="ordered locus">MTH_1127</name>
</gene>
<dbReference type="EC" id="3.5.2.3" evidence="1"/>
<dbReference type="EMBL" id="AE000666">
    <property type="protein sequence ID" value="AAB85616.1"/>
    <property type="status" value="ALT_INIT"/>
    <property type="molecule type" value="Genomic_DNA"/>
</dbReference>
<dbReference type="EMBL" id="U09990">
    <property type="protein sequence ID" value="AAA73440.1"/>
    <property type="molecule type" value="Genomic_DNA"/>
</dbReference>
<dbReference type="PIR" id="A69017">
    <property type="entry name" value="A69017"/>
</dbReference>
<dbReference type="PIR" id="T45151">
    <property type="entry name" value="T45151"/>
</dbReference>
<dbReference type="RefSeq" id="WP_048060972.1">
    <property type="nucleotide sequence ID" value="NC_000916.1"/>
</dbReference>
<dbReference type="SMR" id="O27199"/>
<dbReference type="FunCoup" id="O27199">
    <property type="interactions" value="99"/>
</dbReference>
<dbReference type="STRING" id="187420.MTH_1127"/>
<dbReference type="MEROPS" id="M38.972"/>
<dbReference type="PaxDb" id="187420-MTH_1127"/>
<dbReference type="EnsemblBacteria" id="AAB85616">
    <property type="protein sequence ID" value="AAB85616"/>
    <property type="gene ID" value="MTH_1127"/>
</dbReference>
<dbReference type="GeneID" id="1471535"/>
<dbReference type="GeneID" id="77401656"/>
<dbReference type="KEGG" id="mth:MTH_1127"/>
<dbReference type="PATRIC" id="fig|187420.15.peg.1104"/>
<dbReference type="HOGENOM" id="CLU_015572_1_1_2"/>
<dbReference type="InParanoid" id="O27199"/>
<dbReference type="UniPathway" id="UPA00070">
    <property type="reaction ID" value="UER00117"/>
</dbReference>
<dbReference type="Proteomes" id="UP000005223">
    <property type="component" value="Chromosome"/>
</dbReference>
<dbReference type="GO" id="GO:0005737">
    <property type="term" value="C:cytoplasm"/>
    <property type="evidence" value="ECO:0007669"/>
    <property type="project" value="TreeGrafter"/>
</dbReference>
<dbReference type="GO" id="GO:0004038">
    <property type="term" value="F:allantoinase activity"/>
    <property type="evidence" value="ECO:0007669"/>
    <property type="project" value="TreeGrafter"/>
</dbReference>
<dbReference type="GO" id="GO:0004151">
    <property type="term" value="F:dihydroorotase activity"/>
    <property type="evidence" value="ECO:0007669"/>
    <property type="project" value="UniProtKB-UniRule"/>
</dbReference>
<dbReference type="GO" id="GO:0008270">
    <property type="term" value="F:zinc ion binding"/>
    <property type="evidence" value="ECO:0007669"/>
    <property type="project" value="UniProtKB-UniRule"/>
</dbReference>
<dbReference type="GO" id="GO:0044205">
    <property type="term" value="P:'de novo' UMP biosynthetic process"/>
    <property type="evidence" value="ECO:0007669"/>
    <property type="project" value="UniProtKB-UniRule"/>
</dbReference>
<dbReference type="GO" id="GO:0006145">
    <property type="term" value="P:purine nucleobase catabolic process"/>
    <property type="evidence" value="ECO:0007669"/>
    <property type="project" value="TreeGrafter"/>
</dbReference>
<dbReference type="CDD" id="cd01318">
    <property type="entry name" value="DHOase_IIb"/>
    <property type="match status" value="1"/>
</dbReference>
<dbReference type="Gene3D" id="3.20.20.140">
    <property type="entry name" value="Metal-dependent hydrolases"/>
    <property type="match status" value="1"/>
</dbReference>
<dbReference type="Gene3D" id="2.30.40.10">
    <property type="entry name" value="Urease, subunit C, domain 1"/>
    <property type="match status" value="1"/>
</dbReference>
<dbReference type="HAMAP" id="MF_00220_A">
    <property type="entry name" value="PyrC_classI_A"/>
    <property type="match status" value="1"/>
</dbReference>
<dbReference type="InterPro" id="IPR006680">
    <property type="entry name" value="Amidohydro-rel"/>
</dbReference>
<dbReference type="InterPro" id="IPR004722">
    <property type="entry name" value="DHOase"/>
</dbReference>
<dbReference type="InterPro" id="IPR050138">
    <property type="entry name" value="DHOase/Allantoinase_Hydrolase"/>
</dbReference>
<dbReference type="InterPro" id="IPR002195">
    <property type="entry name" value="Dihydroorotase_CS"/>
</dbReference>
<dbReference type="InterPro" id="IPR011059">
    <property type="entry name" value="Metal-dep_hydrolase_composite"/>
</dbReference>
<dbReference type="InterPro" id="IPR032466">
    <property type="entry name" value="Metal_Hydrolase"/>
</dbReference>
<dbReference type="NCBIfam" id="TIGR00857">
    <property type="entry name" value="pyrC_multi"/>
    <property type="match status" value="1"/>
</dbReference>
<dbReference type="PANTHER" id="PTHR43668">
    <property type="entry name" value="ALLANTOINASE"/>
    <property type="match status" value="1"/>
</dbReference>
<dbReference type="PANTHER" id="PTHR43668:SF2">
    <property type="entry name" value="ALLANTOINASE"/>
    <property type="match status" value="1"/>
</dbReference>
<dbReference type="Pfam" id="PF01979">
    <property type="entry name" value="Amidohydro_1"/>
    <property type="match status" value="1"/>
</dbReference>
<dbReference type="SUPFAM" id="SSF51338">
    <property type="entry name" value="Composite domain of metallo-dependent hydrolases"/>
    <property type="match status" value="1"/>
</dbReference>
<dbReference type="SUPFAM" id="SSF51556">
    <property type="entry name" value="Metallo-dependent hydrolases"/>
    <property type="match status" value="1"/>
</dbReference>
<dbReference type="PROSITE" id="PS00482">
    <property type="entry name" value="DIHYDROOROTASE_1"/>
    <property type="match status" value="1"/>
</dbReference>
<dbReference type="PROSITE" id="PS00483">
    <property type="entry name" value="DIHYDROOROTASE_2"/>
    <property type="match status" value="1"/>
</dbReference>
<protein>
    <recommendedName>
        <fullName evidence="1">Dihydroorotase</fullName>
        <shortName evidence="1">DHOase</shortName>
        <ecNumber evidence="1">3.5.2.3</ecNumber>
    </recommendedName>
</protein>
<proteinExistence type="inferred from homology"/>
<sequence length="431" mass="47946">MFDLSLENCRVDRDLTVNIGVDDGKIVQISRGRIDASEKIDLKGYFVLPGLIDAHVHFRDPGLEYKEDFRTGSMAAAHGGFSTVLDMPNTVPPADNAAEFERKIRIGERKSVVDFGLHAGFRSVSDVKGILRFMPASFKVFMDLTGISTVDGLFRELKDLSAPVPVTVHCENRDVVMKSMKELKDRSDPSAYALARPPLAEEVSVAEVLALSIHHEHPVHICHLSTVKALQLVEPFREYVTCEVTPHHLLLDSGAFRRFGTMVKTNPPLRPPESRIYPEFLDRINIIGTDHAPHGIEEKRKGIWDAPPGIPNLEVVLKLLLTLVSKGRMSLSTIRRMLAEEPARIFGLRSKGRIAEGMDADFTVIDLKETGRIRSDEFYSKAHYTPFEGFSYTGGPVMTIVRGRAVMRDGEVLEGNGRYIPAEHDGKHGSA</sequence>
<reference key="1">
    <citation type="journal article" date="1997" name="J. Bacteriol.">
        <title>Complete genome sequence of Methanobacterium thermoautotrophicum deltaH: functional analysis and comparative genomics.</title>
        <authorList>
            <person name="Smith D.R."/>
            <person name="Doucette-Stamm L.A."/>
            <person name="Deloughery C."/>
            <person name="Lee H.-M."/>
            <person name="Dubois J."/>
            <person name="Aldredge T."/>
            <person name="Bashirzadeh R."/>
            <person name="Blakely D."/>
            <person name="Cook R."/>
            <person name="Gilbert K."/>
            <person name="Harrison D."/>
            <person name="Hoang L."/>
            <person name="Keagle P."/>
            <person name="Lumm W."/>
            <person name="Pothier B."/>
            <person name="Qiu D."/>
            <person name="Spadafora R."/>
            <person name="Vicare R."/>
            <person name="Wang Y."/>
            <person name="Wierzbowski J."/>
            <person name="Gibson R."/>
            <person name="Jiwani N."/>
            <person name="Caruso A."/>
            <person name="Bush D."/>
            <person name="Safer H."/>
            <person name="Patwell D."/>
            <person name="Prabhakar S."/>
            <person name="McDougall S."/>
            <person name="Shimer G."/>
            <person name="Goyal A."/>
            <person name="Pietrovski S."/>
            <person name="Church G.M."/>
            <person name="Daniels C.J."/>
            <person name="Mao J.-I."/>
            <person name="Rice P."/>
            <person name="Noelling J."/>
            <person name="Reeve J.N."/>
        </authorList>
    </citation>
    <scope>NUCLEOTIDE SEQUENCE [LARGE SCALE GENOMIC DNA]</scope>
    <source>
        <strain>ATCC 29096 / DSM 1053 / JCM 10044 / NBRC 100330 / Delta H</strain>
    </source>
</reference>
<reference key="2">
    <citation type="journal article" date="1994" name="J. Bacteriol.">
        <title>Growth phase-dependent transcription of the genes that encode the two methyl coenzyme M reductase isoenzymes and N5-methyltetrahydromethanopterin:coenzyme M methyltransferase in Methanobacterium thermoautotrophicum delta H.</title>
        <authorList>
            <person name="Pihl T.D."/>
            <person name="Sharma S."/>
            <person name="Reeve J.N."/>
        </authorList>
    </citation>
    <scope>NUCLEOTIDE SEQUENCE [GENOMIC DNA]</scope>
    <source>
        <strain>ATCC 29096 / DSM 1053 / JCM 10044 / NBRC 100330 / Delta H</strain>
    </source>
</reference>
<name>PYRC_METTH</name>
<accession>O27199</accession>
<accession>Q50488</accession>
<evidence type="ECO:0000255" key="1">
    <source>
        <dbReference type="HAMAP-Rule" id="MF_00220"/>
    </source>
</evidence>
<evidence type="ECO:0000305" key="2"/>
<feature type="chain" id="PRO_0000147273" description="Dihydroorotase">
    <location>
        <begin position="1"/>
        <end position="431"/>
    </location>
</feature>
<feature type="active site" evidence="1">
    <location>
        <position position="290"/>
    </location>
</feature>
<feature type="binding site" evidence="1">
    <location>
        <position position="55"/>
    </location>
    <ligand>
        <name>Zn(2+)</name>
        <dbReference type="ChEBI" id="CHEBI:29105"/>
        <label>1</label>
    </ligand>
</feature>
<feature type="binding site" evidence="1">
    <location>
        <begin position="57"/>
        <end position="59"/>
    </location>
    <ligand>
        <name>substrate</name>
    </ligand>
</feature>
<feature type="binding site" evidence="1">
    <location>
        <position position="57"/>
    </location>
    <ligand>
        <name>Zn(2+)</name>
        <dbReference type="ChEBI" id="CHEBI:29105"/>
        <label>1</label>
    </ligand>
</feature>
<feature type="binding site" evidence="1">
    <location>
        <position position="89"/>
    </location>
    <ligand>
        <name>substrate</name>
    </ligand>
</feature>
<feature type="binding site" evidence="1">
    <location>
        <position position="139"/>
    </location>
    <ligand>
        <name>Zn(2+)</name>
        <dbReference type="ChEBI" id="CHEBI:29105"/>
        <label>1</label>
    </ligand>
</feature>
<feature type="binding site" evidence="1">
    <location>
        <position position="139"/>
    </location>
    <ligand>
        <name>Zn(2+)</name>
        <dbReference type="ChEBI" id="CHEBI:29105"/>
        <label>2</label>
    </ligand>
</feature>
<feature type="binding site" evidence="1">
    <location>
        <position position="169"/>
    </location>
    <ligand>
        <name>Zn(2+)</name>
        <dbReference type="ChEBI" id="CHEBI:29105"/>
        <label>2</label>
    </ligand>
</feature>
<feature type="binding site" evidence="1">
    <location>
        <position position="223"/>
    </location>
    <ligand>
        <name>Zn(2+)</name>
        <dbReference type="ChEBI" id="CHEBI:29105"/>
        <label>2</label>
    </ligand>
</feature>
<feature type="binding site" evidence="1">
    <location>
        <position position="290"/>
    </location>
    <ligand>
        <name>Zn(2+)</name>
        <dbReference type="ChEBI" id="CHEBI:29105"/>
        <label>1</label>
    </ligand>
</feature>
<feature type="binding site" evidence="1">
    <location>
        <position position="294"/>
    </location>
    <ligand>
        <name>substrate</name>
    </ligand>
</feature>
<feature type="binding site" evidence="1">
    <location>
        <begin position="308"/>
        <end position="309"/>
    </location>
    <ligand>
        <name>substrate</name>
    </ligand>
</feature>
<feature type="modified residue" description="N6-carboxylysine" evidence="1">
    <location>
        <position position="139"/>
    </location>
</feature>
<feature type="sequence conflict" description="In Ref. 2; AAA73440." evidence="2" ref="2">
    <original>MF</original>
    <variation>SL</variation>
    <location>
        <begin position="1"/>
        <end position="2"/>
    </location>
</feature>
<feature type="sequence conflict" description="In Ref. 2; AAA73440." evidence="2" ref="2">
    <original>G</original>
    <variation>A</variation>
    <location>
        <position position="44"/>
    </location>
</feature>
<feature type="sequence conflict" description="In Ref. 2; AAA73440." evidence="2" ref="2">
    <original>F</original>
    <variation>N</variation>
    <location>
        <position position="133"/>
    </location>
</feature>
<feature type="sequence conflict" description="In Ref. 2; AAA73440." evidence="2" ref="2">
    <original>ARPPLAE</original>
    <variation>CKTSPRR</variation>
    <location>
        <begin position="195"/>
        <end position="201"/>
    </location>
</feature>
<feature type="sequence conflict" description="In Ref. 2; AAA73440." evidence="2" ref="2">
    <original>CE</original>
    <variation>SQ</variation>
    <location>
        <begin position="242"/>
        <end position="243"/>
    </location>
</feature>
<feature type="sequence conflict" description="In Ref. 2; AAA73440." evidence="2" ref="2">
    <original>A</original>
    <variation>P</variation>
    <location>
        <position position="343"/>
    </location>
</feature>
<feature type="sequence conflict" description="In Ref. 2; AAA73440." evidence="2" ref="2">
    <original>GPVMTIVRGR</original>
    <variation>ARHDHCQGQ</variation>
    <location>
        <begin position="395"/>
        <end position="404"/>
    </location>
</feature>